<protein>
    <recommendedName>
        <fullName evidence="1">Large ribosomal subunit protein bL9</fullName>
    </recommendedName>
    <alternativeName>
        <fullName evidence="2">50S ribosomal protein L9</fullName>
    </alternativeName>
</protein>
<reference key="1">
    <citation type="journal article" date="2007" name="PLoS Genet.">
        <title>Patterns and implications of gene gain and loss in the evolution of Prochlorococcus.</title>
        <authorList>
            <person name="Kettler G.C."/>
            <person name="Martiny A.C."/>
            <person name="Huang K."/>
            <person name="Zucker J."/>
            <person name="Coleman M.L."/>
            <person name="Rodrigue S."/>
            <person name="Chen F."/>
            <person name="Lapidus A."/>
            <person name="Ferriera S."/>
            <person name="Johnson J."/>
            <person name="Steglich C."/>
            <person name="Church G.M."/>
            <person name="Richardson P."/>
            <person name="Chisholm S.W."/>
        </authorList>
    </citation>
    <scope>NUCLEOTIDE SEQUENCE [LARGE SCALE GENOMIC DNA]</scope>
    <source>
        <strain>AS9601</strain>
    </source>
</reference>
<comment type="function">
    <text evidence="1">Binds to the 23S rRNA.</text>
</comment>
<comment type="similarity">
    <text evidence="1">Belongs to the bacterial ribosomal protein bL9 family.</text>
</comment>
<dbReference type="EMBL" id="CP000551">
    <property type="protein sequence ID" value="ABM71165.1"/>
    <property type="molecule type" value="Genomic_DNA"/>
</dbReference>
<dbReference type="RefSeq" id="WP_011819283.1">
    <property type="nucleotide sequence ID" value="NC_008816.1"/>
</dbReference>
<dbReference type="SMR" id="A2BTQ4"/>
<dbReference type="STRING" id="146891.A9601_18821"/>
<dbReference type="KEGG" id="pmb:A9601_18821"/>
<dbReference type="eggNOG" id="COG0359">
    <property type="taxonomic scope" value="Bacteria"/>
</dbReference>
<dbReference type="HOGENOM" id="CLU_078938_5_1_3"/>
<dbReference type="OrthoDB" id="9788336at2"/>
<dbReference type="Proteomes" id="UP000002590">
    <property type="component" value="Chromosome"/>
</dbReference>
<dbReference type="GO" id="GO:1990904">
    <property type="term" value="C:ribonucleoprotein complex"/>
    <property type="evidence" value="ECO:0007669"/>
    <property type="project" value="UniProtKB-KW"/>
</dbReference>
<dbReference type="GO" id="GO:0005840">
    <property type="term" value="C:ribosome"/>
    <property type="evidence" value="ECO:0007669"/>
    <property type="project" value="UniProtKB-KW"/>
</dbReference>
<dbReference type="GO" id="GO:0019843">
    <property type="term" value="F:rRNA binding"/>
    <property type="evidence" value="ECO:0007669"/>
    <property type="project" value="UniProtKB-UniRule"/>
</dbReference>
<dbReference type="GO" id="GO:0003735">
    <property type="term" value="F:structural constituent of ribosome"/>
    <property type="evidence" value="ECO:0007669"/>
    <property type="project" value="InterPro"/>
</dbReference>
<dbReference type="GO" id="GO:0006412">
    <property type="term" value="P:translation"/>
    <property type="evidence" value="ECO:0007669"/>
    <property type="project" value="UniProtKB-UniRule"/>
</dbReference>
<dbReference type="Gene3D" id="3.10.430.100">
    <property type="entry name" value="Ribosomal protein L9, C-terminal domain"/>
    <property type="match status" value="1"/>
</dbReference>
<dbReference type="Gene3D" id="3.40.5.10">
    <property type="entry name" value="Ribosomal protein L9, N-terminal domain"/>
    <property type="match status" value="1"/>
</dbReference>
<dbReference type="HAMAP" id="MF_00503">
    <property type="entry name" value="Ribosomal_bL9"/>
    <property type="match status" value="1"/>
</dbReference>
<dbReference type="InterPro" id="IPR000244">
    <property type="entry name" value="Ribosomal_bL9"/>
</dbReference>
<dbReference type="InterPro" id="IPR009027">
    <property type="entry name" value="Ribosomal_bL9/RNase_H1_N"/>
</dbReference>
<dbReference type="InterPro" id="IPR020594">
    <property type="entry name" value="Ribosomal_bL9_bac/chp"/>
</dbReference>
<dbReference type="InterPro" id="IPR020069">
    <property type="entry name" value="Ribosomal_bL9_C"/>
</dbReference>
<dbReference type="InterPro" id="IPR036791">
    <property type="entry name" value="Ribosomal_bL9_C_sf"/>
</dbReference>
<dbReference type="InterPro" id="IPR020070">
    <property type="entry name" value="Ribosomal_bL9_N"/>
</dbReference>
<dbReference type="InterPro" id="IPR036935">
    <property type="entry name" value="Ribosomal_bL9_N_sf"/>
</dbReference>
<dbReference type="NCBIfam" id="TIGR00158">
    <property type="entry name" value="L9"/>
    <property type="match status" value="1"/>
</dbReference>
<dbReference type="PANTHER" id="PTHR21368">
    <property type="entry name" value="50S RIBOSOMAL PROTEIN L9"/>
    <property type="match status" value="1"/>
</dbReference>
<dbReference type="Pfam" id="PF03948">
    <property type="entry name" value="Ribosomal_L9_C"/>
    <property type="match status" value="1"/>
</dbReference>
<dbReference type="Pfam" id="PF01281">
    <property type="entry name" value="Ribosomal_L9_N"/>
    <property type="match status" value="1"/>
</dbReference>
<dbReference type="SUPFAM" id="SSF55658">
    <property type="entry name" value="L9 N-domain-like"/>
    <property type="match status" value="1"/>
</dbReference>
<dbReference type="SUPFAM" id="SSF55653">
    <property type="entry name" value="Ribosomal protein L9 C-domain"/>
    <property type="match status" value="1"/>
</dbReference>
<dbReference type="PROSITE" id="PS00651">
    <property type="entry name" value="RIBOSOMAL_L9"/>
    <property type="match status" value="1"/>
</dbReference>
<organism>
    <name type="scientific">Prochlorococcus marinus (strain AS9601)</name>
    <dbReference type="NCBI Taxonomy" id="146891"/>
    <lineage>
        <taxon>Bacteria</taxon>
        <taxon>Bacillati</taxon>
        <taxon>Cyanobacteriota</taxon>
        <taxon>Cyanophyceae</taxon>
        <taxon>Synechococcales</taxon>
        <taxon>Prochlorococcaceae</taxon>
        <taxon>Prochlorococcus</taxon>
    </lineage>
</organism>
<accession>A2BTQ4</accession>
<evidence type="ECO:0000255" key="1">
    <source>
        <dbReference type="HAMAP-Rule" id="MF_00503"/>
    </source>
</evidence>
<evidence type="ECO:0000305" key="2"/>
<feature type="chain" id="PRO_1000014834" description="Large ribosomal subunit protein bL9">
    <location>
        <begin position="1"/>
        <end position="151"/>
    </location>
</feature>
<name>RL9_PROMS</name>
<proteinExistence type="inferred from homology"/>
<sequence length="151" mass="16372">MAKRVQVALTESIASLGKEGDLVDVAPGYARNFLLPYGKAMNVTPAVLKQIERKKEKEKIAAGKLKQEALDFQTALSTIGRFTIKKQVGEDGVLFGTVTNGDVAEAIEAATKKEIDRRNITVPDIHNLGAFTAKIKLHPEVNAEVNIEVTS</sequence>
<gene>
    <name evidence="1" type="primary">rplI</name>
    <name evidence="1" type="synonym">rpl9</name>
    <name type="ordered locus">A9601_18821</name>
</gene>
<keyword id="KW-0687">Ribonucleoprotein</keyword>
<keyword id="KW-0689">Ribosomal protein</keyword>
<keyword id="KW-0694">RNA-binding</keyword>
<keyword id="KW-0699">rRNA-binding</keyword>